<sequence length="247" mass="27202">MSGHNKWSTIKHKKGAADAKRGKIFTKIIKEISVAAKLGGGDPAANPRLRTAIDKAKGENMPKDNIERAIKKGTGGMEGVVYEEIVYEGYGPGGVAVLVEVMTDNRNRTVSEVRSIFTKCNGNMGEAGCVAWMFDKKGVISYDTSLDFDQLFEAALEAGAEDVVEEDEQIEVYTEPSSFIEVRDALEAKGFKFQSAEITMIPQTQVALEGKQAESMLKMMDRLEDCDDVQNVYANFDISADEMEKMM</sequence>
<gene>
    <name type="ordered locus">Glov_1245</name>
</gene>
<organism>
    <name type="scientific">Trichlorobacter lovleyi (strain ATCC BAA-1151 / DSM 17278 / SZ)</name>
    <name type="common">Geobacter lovleyi</name>
    <dbReference type="NCBI Taxonomy" id="398767"/>
    <lineage>
        <taxon>Bacteria</taxon>
        <taxon>Pseudomonadati</taxon>
        <taxon>Thermodesulfobacteriota</taxon>
        <taxon>Desulfuromonadia</taxon>
        <taxon>Geobacterales</taxon>
        <taxon>Geobacteraceae</taxon>
        <taxon>Trichlorobacter</taxon>
    </lineage>
</organism>
<accession>B3E787</accession>
<comment type="subcellular location">
    <subcellularLocation>
        <location evidence="1">Cytoplasm</location>
    </subcellularLocation>
</comment>
<comment type="similarity">
    <text evidence="1">Belongs to the TACO1 family.</text>
</comment>
<dbReference type="EMBL" id="CP001089">
    <property type="protein sequence ID" value="ACD94967.1"/>
    <property type="molecule type" value="Genomic_DNA"/>
</dbReference>
<dbReference type="RefSeq" id="WP_012469315.1">
    <property type="nucleotide sequence ID" value="NC_010814.1"/>
</dbReference>
<dbReference type="SMR" id="B3E787"/>
<dbReference type="STRING" id="398767.Glov_1245"/>
<dbReference type="KEGG" id="glo:Glov_1245"/>
<dbReference type="eggNOG" id="COG0217">
    <property type="taxonomic scope" value="Bacteria"/>
</dbReference>
<dbReference type="HOGENOM" id="CLU_062974_2_2_7"/>
<dbReference type="OrthoDB" id="9781053at2"/>
<dbReference type="Proteomes" id="UP000002420">
    <property type="component" value="Chromosome"/>
</dbReference>
<dbReference type="GO" id="GO:0005829">
    <property type="term" value="C:cytosol"/>
    <property type="evidence" value="ECO:0007669"/>
    <property type="project" value="TreeGrafter"/>
</dbReference>
<dbReference type="GO" id="GO:0003677">
    <property type="term" value="F:DNA binding"/>
    <property type="evidence" value="ECO:0007669"/>
    <property type="project" value="UniProtKB-UniRule"/>
</dbReference>
<dbReference type="GO" id="GO:0006355">
    <property type="term" value="P:regulation of DNA-templated transcription"/>
    <property type="evidence" value="ECO:0007669"/>
    <property type="project" value="UniProtKB-UniRule"/>
</dbReference>
<dbReference type="FunFam" id="1.10.10.200:FF:000001">
    <property type="entry name" value="Probable transcriptional regulatory protein YebC"/>
    <property type="match status" value="1"/>
</dbReference>
<dbReference type="FunFam" id="3.30.70.980:FF:000002">
    <property type="entry name" value="Probable transcriptional regulatory protein YebC"/>
    <property type="match status" value="1"/>
</dbReference>
<dbReference type="Gene3D" id="1.10.10.200">
    <property type="match status" value="1"/>
</dbReference>
<dbReference type="Gene3D" id="3.30.70.980">
    <property type="match status" value="2"/>
</dbReference>
<dbReference type="HAMAP" id="MF_00693">
    <property type="entry name" value="Transcrip_reg_TACO1"/>
    <property type="match status" value="1"/>
</dbReference>
<dbReference type="InterPro" id="IPR017856">
    <property type="entry name" value="Integrase-like_N"/>
</dbReference>
<dbReference type="InterPro" id="IPR048300">
    <property type="entry name" value="TACO1_YebC-like_2nd/3rd_dom"/>
</dbReference>
<dbReference type="InterPro" id="IPR049083">
    <property type="entry name" value="TACO1_YebC_N"/>
</dbReference>
<dbReference type="InterPro" id="IPR002876">
    <property type="entry name" value="Transcrip_reg_TACO1-like"/>
</dbReference>
<dbReference type="InterPro" id="IPR026564">
    <property type="entry name" value="Transcrip_reg_TACO1-like_dom3"/>
</dbReference>
<dbReference type="InterPro" id="IPR029072">
    <property type="entry name" value="YebC-like"/>
</dbReference>
<dbReference type="NCBIfam" id="NF001030">
    <property type="entry name" value="PRK00110.1"/>
    <property type="match status" value="1"/>
</dbReference>
<dbReference type="NCBIfam" id="NF009044">
    <property type="entry name" value="PRK12378.1"/>
    <property type="match status" value="1"/>
</dbReference>
<dbReference type="NCBIfam" id="TIGR01033">
    <property type="entry name" value="YebC/PmpR family DNA-binding transcriptional regulator"/>
    <property type="match status" value="1"/>
</dbReference>
<dbReference type="PANTHER" id="PTHR12532:SF6">
    <property type="entry name" value="TRANSCRIPTIONAL REGULATORY PROTEIN YEBC-RELATED"/>
    <property type="match status" value="1"/>
</dbReference>
<dbReference type="PANTHER" id="PTHR12532">
    <property type="entry name" value="TRANSLATIONAL ACTIVATOR OF CYTOCHROME C OXIDASE 1"/>
    <property type="match status" value="1"/>
</dbReference>
<dbReference type="Pfam" id="PF20772">
    <property type="entry name" value="TACO1_YebC_N"/>
    <property type="match status" value="1"/>
</dbReference>
<dbReference type="Pfam" id="PF01709">
    <property type="entry name" value="Transcrip_reg"/>
    <property type="match status" value="1"/>
</dbReference>
<dbReference type="SUPFAM" id="SSF75625">
    <property type="entry name" value="YebC-like"/>
    <property type="match status" value="1"/>
</dbReference>
<feature type="chain" id="PRO_1000132197" description="Probable transcriptional regulatory protein Glov_1245">
    <location>
        <begin position="1"/>
        <end position="247"/>
    </location>
</feature>
<evidence type="ECO:0000255" key="1">
    <source>
        <dbReference type="HAMAP-Rule" id="MF_00693"/>
    </source>
</evidence>
<reference key="1">
    <citation type="submission" date="2008-05" db="EMBL/GenBank/DDBJ databases">
        <title>Complete sequence of chromosome of Geobacter lovleyi SZ.</title>
        <authorList>
            <consortium name="US DOE Joint Genome Institute"/>
            <person name="Lucas S."/>
            <person name="Copeland A."/>
            <person name="Lapidus A."/>
            <person name="Glavina del Rio T."/>
            <person name="Dalin E."/>
            <person name="Tice H."/>
            <person name="Bruce D."/>
            <person name="Goodwin L."/>
            <person name="Pitluck S."/>
            <person name="Chertkov O."/>
            <person name="Meincke L."/>
            <person name="Brettin T."/>
            <person name="Detter J.C."/>
            <person name="Han C."/>
            <person name="Tapia R."/>
            <person name="Kuske C.R."/>
            <person name="Schmutz J."/>
            <person name="Larimer F."/>
            <person name="Land M."/>
            <person name="Hauser L."/>
            <person name="Kyrpides N."/>
            <person name="Mikhailova N."/>
            <person name="Sung Y."/>
            <person name="Fletcher K.E."/>
            <person name="Ritalahti K.M."/>
            <person name="Loeffler F.E."/>
            <person name="Richardson P."/>
        </authorList>
    </citation>
    <scope>NUCLEOTIDE SEQUENCE [LARGE SCALE GENOMIC DNA]</scope>
    <source>
        <strain>ATCC BAA-1151 / DSM 17278 / SZ</strain>
    </source>
</reference>
<keyword id="KW-0963">Cytoplasm</keyword>
<keyword id="KW-0238">DNA-binding</keyword>
<keyword id="KW-1185">Reference proteome</keyword>
<keyword id="KW-0804">Transcription</keyword>
<keyword id="KW-0805">Transcription regulation</keyword>
<name>Y1245_TRIL1</name>
<protein>
    <recommendedName>
        <fullName evidence="1">Probable transcriptional regulatory protein Glov_1245</fullName>
    </recommendedName>
</protein>
<proteinExistence type="inferred from homology"/>